<keyword id="KW-0963">Cytoplasm</keyword>
<keyword id="KW-0648">Protein biosynthesis</keyword>
<keyword id="KW-1185">Reference proteome</keyword>
<dbReference type="EMBL" id="CP000356">
    <property type="protein sequence ID" value="ABF53669.1"/>
    <property type="molecule type" value="Genomic_DNA"/>
</dbReference>
<dbReference type="RefSeq" id="WP_011542245.1">
    <property type="nucleotide sequence ID" value="NC_008048.1"/>
</dbReference>
<dbReference type="SMR" id="Q1GRQ3"/>
<dbReference type="STRING" id="317655.Sala_1957"/>
<dbReference type="KEGG" id="sal:Sala_1957"/>
<dbReference type="eggNOG" id="COG0233">
    <property type="taxonomic scope" value="Bacteria"/>
</dbReference>
<dbReference type="HOGENOM" id="CLU_073981_2_0_5"/>
<dbReference type="OrthoDB" id="9804006at2"/>
<dbReference type="Proteomes" id="UP000006578">
    <property type="component" value="Chromosome"/>
</dbReference>
<dbReference type="GO" id="GO:0005829">
    <property type="term" value="C:cytosol"/>
    <property type="evidence" value="ECO:0007669"/>
    <property type="project" value="GOC"/>
</dbReference>
<dbReference type="GO" id="GO:0043023">
    <property type="term" value="F:ribosomal large subunit binding"/>
    <property type="evidence" value="ECO:0007669"/>
    <property type="project" value="TreeGrafter"/>
</dbReference>
<dbReference type="GO" id="GO:0002184">
    <property type="term" value="P:cytoplasmic translational termination"/>
    <property type="evidence" value="ECO:0007669"/>
    <property type="project" value="TreeGrafter"/>
</dbReference>
<dbReference type="CDD" id="cd00520">
    <property type="entry name" value="RRF"/>
    <property type="match status" value="1"/>
</dbReference>
<dbReference type="FunFam" id="1.10.132.20:FF:000001">
    <property type="entry name" value="Ribosome-recycling factor"/>
    <property type="match status" value="1"/>
</dbReference>
<dbReference type="FunFam" id="3.30.1360.40:FF:000001">
    <property type="entry name" value="Ribosome-recycling factor"/>
    <property type="match status" value="1"/>
</dbReference>
<dbReference type="Gene3D" id="3.30.1360.40">
    <property type="match status" value="1"/>
</dbReference>
<dbReference type="Gene3D" id="1.10.132.20">
    <property type="entry name" value="Ribosome-recycling factor"/>
    <property type="match status" value="1"/>
</dbReference>
<dbReference type="HAMAP" id="MF_00040">
    <property type="entry name" value="RRF"/>
    <property type="match status" value="1"/>
</dbReference>
<dbReference type="InterPro" id="IPR002661">
    <property type="entry name" value="Ribosome_recyc_fac"/>
</dbReference>
<dbReference type="InterPro" id="IPR023584">
    <property type="entry name" value="Ribosome_recyc_fac_dom"/>
</dbReference>
<dbReference type="InterPro" id="IPR036191">
    <property type="entry name" value="RRF_sf"/>
</dbReference>
<dbReference type="NCBIfam" id="TIGR00496">
    <property type="entry name" value="frr"/>
    <property type="match status" value="1"/>
</dbReference>
<dbReference type="PANTHER" id="PTHR20982:SF3">
    <property type="entry name" value="MITOCHONDRIAL RIBOSOME RECYCLING FACTOR PSEUDO 1"/>
    <property type="match status" value="1"/>
</dbReference>
<dbReference type="PANTHER" id="PTHR20982">
    <property type="entry name" value="RIBOSOME RECYCLING FACTOR"/>
    <property type="match status" value="1"/>
</dbReference>
<dbReference type="Pfam" id="PF01765">
    <property type="entry name" value="RRF"/>
    <property type="match status" value="1"/>
</dbReference>
<dbReference type="SUPFAM" id="SSF55194">
    <property type="entry name" value="Ribosome recycling factor, RRF"/>
    <property type="match status" value="1"/>
</dbReference>
<feature type="chain" id="PRO_1000003273" description="Ribosome-recycling factor">
    <location>
        <begin position="1"/>
        <end position="184"/>
    </location>
</feature>
<feature type="region of interest" description="Disordered" evidence="2">
    <location>
        <begin position="133"/>
        <end position="163"/>
    </location>
</feature>
<feature type="compositionally biased region" description="Basic and acidic residues" evidence="2">
    <location>
        <begin position="133"/>
        <end position="162"/>
    </location>
</feature>
<proteinExistence type="inferred from homology"/>
<name>RRF_SPHAL</name>
<evidence type="ECO:0000255" key="1">
    <source>
        <dbReference type="HAMAP-Rule" id="MF_00040"/>
    </source>
</evidence>
<evidence type="ECO:0000256" key="2">
    <source>
        <dbReference type="SAM" id="MobiDB-lite"/>
    </source>
</evidence>
<sequence length="184" mass="20435">MAKYDKADLERRMHGAVESLKHDLAGLRTGRANAALLDPVTVEVYGSQMPLNQIASISVPEPRMLSVQVWDKANVGPVDKAIRSAGLGLNPIVDGQMLRLPIPEMTQERRKELSKLAGQYAEKARVAVRNVRRDGMDNLKQDENKKEISEDERKRHETEVQKLTDATIAEIDAAATAKEKEILG</sequence>
<protein>
    <recommendedName>
        <fullName evidence="1">Ribosome-recycling factor</fullName>
        <shortName evidence="1">RRF</shortName>
    </recommendedName>
    <alternativeName>
        <fullName evidence="1">Ribosome-releasing factor</fullName>
    </alternativeName>
</protein>
<organism>
    <name type="scientific">Sphingopyxis alaskensis (strain DSM 13593 / LMG 18877 / RB2256)</name>
    <name type="common">Sphingomonas alaskensis</name>
    <dbReference type="NCBI Taxonomy" id="317655"/>
    <lineage>
        <taxon>Bacteria</taxon>
        <taxon>Pseudomonadati</taxon>
        <taxon>Pseudomonadota</taxon>
        <taxon>Alphaproteobacteria</taxon>
        <taxon>Sphingomonadales</taxon>
        <taxon>Sphingomonadaceae</taxon>
        <taxon>Sphingopyxis</taxon>
    </lineage>
</organism>
<accession>Q1GRQ3</accession>
<comment type="function">
    <text evidence="1">Responsible for the release of ribosomes from messenger RNA at the termination of protein biosynthesis. May increase the efficiency of translation by recycling ribosomes from one round of translation to another.</text>
</comment>
<comment type="subcellular location">
    <subcellularLocation>
        <location evidence="1">Cytoplasm</location>
    </subcellularLocation>
</comment>
<comment type="similarity">
    <text evidence="1">Belongs to the RRF family.</text>
</comment>
<gene>
    <name evidence="1" type="primary">frr</name>
    <name type="ordered locus">Sala_1957</name>
</gene>
<reference key="1">
    <citation type="journal article" date="2009" name="Proc. Natl. Acad. Sci. U.S.A.">
        <title>The genomic basis of trophic strategy in marine bacteria.</title>
        <authorList>
            <person name="Lauro F.M."/>
            <person name="McDougald D."/>
            <person name="Thomas T."/>
            <person name="Williams T.J."/>
            <person name="Egan S."/>
            <person name="Rice S."/>
            <person name="DeMaere M.Z."/>
            <person name="Ting L."/>
            <person name="Ertan H."/>
            <person name="Johnson J."/>
            <person name="Ferriera S."/>
            <person name="Lapidus A."/>
            <person name="Anderson I."/>
            <person name="Kyrpides N."/>
            <person name="Munk A.C."/>
            <person name="Detter C."/>
            <person name="Han C.S."/>
            <person name="Brown M.V."/>
            <person name="Robb F.T."/>
            <person name="Kjelleberg S."/>
            <person name="Cavicchioli R."/>
        </authorList>
    </citation>
    <scope>NUCLEOTIDE SEQUENCE [LARGE SCALE GENOMIC DNA]</scope>
    <source>
        <strain>DSM 13593 / LMG 18877 / RB2256</strain>
    </source>
</reference>